<accession>A9IYR6</accession>
<gene>
    <name evidence="1" type="primary">pgk</name>
    <name type="ordered locus">BT_2417</name>
</gene>
<comment type="catalytic activity">
    <reaction evidence="1">
        <text>(2R)-3-phosphoglycerate + ATP = (2R)-3-phospho-glyceroyl phosphate + ADP</text>
        <dbReference type="Rhea" id="RHEA:14801"/>
        <dbReference type="ChEBI" id="CHEBI:30616"/>
        <dbReference type="ChEBI" id="CHEBI:57604"/>
        <dbReference type="ChEBI" id="CHEBI:58272"/>
        <dbReference type="ChEBI" id="CHEBI:456216"/>
        <dbReference type="EC" id="2.7.2.3"/>
    </reaction>
</comment>
<comment type="pathway">
    <text evidence="1">Carbohydrate degradation; glycolysis; pyruvate from D-glyceraldehyde 3-phosphate: step 2/5.</text>
</comment>
<comment type="subunit">
    <text evidence="1">Monomer.</text>
</comment>
<comment type="subcellular location">
    <subcellularLocation>
        <location evidence="1">Cytoplasm</location>
    </subcellularLocation>
</comment>
<comment type="similarity">
    <text evidence="1">Belongs to the phosphoglycerate kinase family.</text>
</comment>
<feature type="chain" id="PRO_1000076580" description="Phosphoglycerate kinase">
    <location>
        <begin position="1"/>
        <end position="397"/>
    </location>
</feature>
<feature type="binding site" evidence="1">
    <location>
        <begin position="21"/>
        <end position="23"/>
    </location>
    <ligand>
        <name>substrate</name>
    </ligand>
</feature>
<feature type="binding site" evidence="1">
    <location>
        <position position="36"/>
    </location>
    <ligand>
        <name>substrate</name>
    </ligand>
</feature>
<feature type="binding site" evidence="1">
    <location>
        <begin position="59"/>
        <end position="62"/>
    </location>
    <ligand>
        <name>substrate</name>
    </ligand>
</feature>
<feature type="binding site" evidence="1">
    <location>
        <position position="118"/>
    </location>
    <ligand>
        <name>substrate</name>
    </ligand>
</feature>
<feature type="binding site" evidence="1">
    <location>
        <position position="151"/>
    </location>
    <ligand>
        <name>substrate</name>
    </ligand>
</feature>
<feature type="binding site" evidence="1">
    <location>
        <position position="201"/>
    </location>
    <ligand>
        <name>ATP</name>
        <dbReference type="ChEBI" id="CHEBI:30616"/>
    </ligand>
</feature>
<feature type="binding site" evidence="1">
    <location>
        <position position="323"/>
    </location>
    <ligand>
        <name>ATP</name>
        <dbReference type="ChEBI" id="CHEBI:30616"/>
    </ligand>
</feature>
<feature type="binding site" evidence="1">
    <location>
        <begin position="353"/>
        <end position="356"/>
    </location>
    <ligand>
        <name>ATP</name>
        <dbReference type="ChEBI" id="CHEBI:30616"/>
    </ligand>
</feature>
<keyword id="KW-0067">ATP-binding</keyword>
<keyword id="KW-0963">Cytoplasm</keyword>
<keyword id="KW-0324">Glycolysis</keyword>
<keyword id="KW-0418">Kinase</keyword>
<keyword id="KW-0547">Nucleotide-binding</keyword>
<keyword id="KW-0808">Transferase</keyword>
<organism>
    <name type="scientific">Bartonella tribocorum (strain CIP 105476 / IBS 506)</name>
    <dbReference type="NCBI Taxonomy" id="382640"/>
    <lineage>
        <taxon>Bacteria</taxon>
        <taxon>Pseudomonadati</taxon>
        <taxon>Pseudomonadota</taxon>
        <taxon>Alphaproteobacteria</taxon>
        <taxon>Hyphomicrobiales</taxon>
        <taxon>Bartonellaceae</taxon>
        <taxon>Bartonella</taxon>
    </lineage>
</organism>
<sequence>MVFRTLDDVDVLGKRVLVRVDFNVPMALGKVCDETRLVRHKETLVELQKRGAKLILLSHCGRPKGKIEPEFSLRPVVSVLEKIINQPVAFAPDCIGSTVQVAVEALQNGDVLLLENVRFYAGEEKNDCSFAGALAHNGDLYVNDAFSVSHRAHASVEGITRLLPSYAGRSLQGELQALEKGLGNPTRPVVALVGGAKVSSKLFVLNHLVEKVDTLVIGGGMANSFLAAQGIHVGKSLCEHTLMETVKKIIKKAQECHCTLLLPVDVVVGFRFEKDAPHRLYDIGDIPEEGMILDIGTRSIVHINSVIDKAATLVWNGPLGVFEMPPFDKGTIAVARHAAERSLTGRLVSIAGGGDTVFALNHADVANDFTYLSTAGGAFLEWMEGKVLPGILALMQP</sequence>
<evidence type="ECO:0000255" key="1">
    <source>
        <dbReference type="HAMAP-Rule" id="MF_00145"/>
    </source>
</evidence>
<protein>
    <recommendedName>
        <fullName evidence="1">Phosphoglycerate kinase</fullName>
        <ecNumber evidence="1">2.7.2.3</ecNumber>
    </recommendedName>
</protein>
<dbReference type="EC" id="2.7.2.3" evidence="1"/>
<dbReference type="EMBL" id="AM260525">
    <property type="protein sequence ID" value="CAK02410.1"/>
    <property type="molecule type" value="Genomic_DNA"/>
</dbReference>
<dbReference type="RefSeq" id="WP_012232459.1">
    <property type="nucleotide sequence ID" value="NC_010161.1"/>
</dbReference>
<dbReference type="SMR" id="A9IYR6"/>
<dbReference type="KEGG" id="btr:BT_2417"/>
<dbReference type="eggNOG" id="COG0126">
    <property type="taxonomic scope" value="Bacteria"/>
</dbReference>
<dbReference type="HOGENOM" id="CLU_025427_0_2_5"/>
<dbReference type="UniPathway" id="UPA00109">
    <property type="reaction ID" value="UER00185"/>
</dbReference>
<dbReference type="Proteomes" id="UP000001592">
    <property type="component" value="Chromosome"/>
</dbReference>
<dbReference type="GO" id="GO:0005829">
    <property type="term" value="C:cytosol"/>
    <property type="evidence" value="ECO:0007669"/>
    <property type="project" value="TreeGrafter"/>
</dbReference>
<dbReference type="GO" id="GO:0043531">
    <property type="term" value="F:ADP binding"/>
    <property type="evidence" value="ECO:0007669"/>
    <property type="project" value="TreeGrafter"/>
</dbReference>
<dbReference type="GO" id="GO:0005524">
    <property type="term" value="F:ATP binding"/>
    <property type="evidence" value="ECO:0007669"/>
    <property type="project" value="UniProtKB-KW"/>
</dbReference>
<dbReference type="GO" id="GO:0004618">
    <property type="term" value="F:phosphoglycerate kinase activity"/>
    <property type="evidence" value="ECO:0007669"/>
    <property type="project" value="UniProtKB-UniRule"/>
</dbReference>
<dbReference type="GO" id="GO:0006094">
    <property type="term" value="P:gluconeogenesis"/>
    <property type="evidence" value="ECO:0007669"/>
    <property type="project" value="TreeGrafter"/>
</dbReference>
<dbReference type="GO" id="GO:0006096">
    <property type="term" value="P:glycolytic process"/>
    <property type="evidence" value="ECO:0007669"/>
    <property type="project" value="UniProtKB-UniRule"/>
</dbReference>
<dbReference type="FunFam" id="3.40.50.1260:FF:000001">
    <property type="entry name" value="Phosphoglycerate kinase"/>
    <property type="match status" value="1"/>
</dbReference>
<dbReference type="FunFam" id="3.40.50.1260:FF:000006">
    <property type="entry name" value="Phosphoglycerate kinase"/>
    <property type="match status" value="1"/>
</dbReference>
<dbReference type="Gene3D" id="3.40.50.1260">
    <property type="entry name" value="Phosphoglycerate kinase, N-terminal domain"/>
    <property type="match status" value="2"/>
</dbReference>
<dbReference type="HAMAP" id="MF_00145">
    <property type="entry name" value="Phosphoglyc_kinase"/>
    <property type="match status" value="1"/>
</dbReference>
<dbReference type="InterPro" id="IPR001576">
    <property type="entry name" value="Phosphoglycerate_kinase"/>
</dbReference>
<dbReference type="InterPro" id="IPR015911">
    <property type="entry name" value="Phosphoglycerate_kinase_CS"/>
</dbReference>
<dbReference type="InterPro" id="IPR015824">
    <property type="entry name" value="Phosphoglycerate_kinase_N"/>
</dbReference>
<dbReference type="InterPro" id="IPR036043">
    <property type="entry name" value="Phosphoglycerate_kinase_sf"/>
</dbReference>
<dbReference type="PANTHER" id="PTHR11406">
    <property type="entry name" value="PHOSPHOGLYCERATE KINASE"/>
    <property type="match status" value="1"/>
</dbReference>
<dbReference type="PANTHER" id="PTHR11406:SF23">
    <property type="entry name" value="PHOSPHOGLYCERATE KINASE 1, CHLOROPLASTIC-RELATED"/>
    <property type="match status" value="1"/>
</dbReference>
<dbReference type="Pfam" id="PF00162">
    <property type="entry name" value="PGK"/>
    <property type="match status" value="1"/>
</dbReference>
<dbReference type="PIRSF" id="PIRSF000724">
    <property type="entry name" value="Pgk"/>
    <property type="match status" value="1"/>
</dbReference>
<dbReference type="PRINTS" id="PR00477">
    <property type="entry name" value="PHGLYCKINASE"/>
</dbReference>
<dbReference type="SUPFAM" id="SSF53748">
    <property type="entry name" value="Phosphoglycerate kinase"/>
    <property type="match status" value="1"/>
</dbReference>
<dbReference type="PROSITE" id="PS00111">
    <property type="entry name" value="PGLYCERATE_KINASE"/>
    <property type="match status" value="1"/>
</dbReference>
<reference key="1">
    <citation type="journal article" date="2007" name="Nat. Genet.">
        <title>Genomic analysis of Bartonella identifies type IV secretion systems as host adaptability factors.</title>
        <authorList>
            <person name="Saenz H.L."/>
            <person name="Engel P."/>
            <person name="Stoeckli M.C."/>
            <person name="Lanz C."/>
            <person name="Raddatz G."/>
            <person name="Vayssier-Taussat M."/>
            <person name="Birtles R."/>
            <person name="Schuster S.C."/>
            <person name="Dehio C."/>
        </authorList>
    </citation>
    <scope>NUCLEOTIDE SEQUENCE [LARGE SCALE GENOMIC DNA]</scope>
    <source>
        <strain>CIP 105476 / IBS 506</strain>
    </source>
</reference>
<proteinExistence type="inferred from homology"/>
<name>PGK_BART1</name>